<organism>
    <name type="scientific">Kluyveromyces lactis (strain ATCC 8585 / CBS 2359 / DSM 70799 / NBRC 1267 / NRRL Y-1140 / WM37)</name>
    <name type="common">Yeast</name>
    <name type="synonym">Candida sphaerica</name>
    <dbReference type="NCBI Taxonomy" id="284590"/>
    <lineage>
        <taxon>Eukaryota</taxon>
        <taxon>Fungi</taxon>
        <taxon>Dikarya</taxon>
        <taxon>Ascomycota</taxon>
        <taxon>Saccharomycotina</taxon>
        <taxon>Saccharomycetes</taxon>
        <taxon>Saccharomycetales</taxon>
        <taxon>Saccharomycetaceae</taxon>
        <taxon>Kluyveromyces</taxon>
    </lineage>
</organism>
<feature type="chain" id="PRO_0000311653" description="UPF0507 protein KLLA0D01133g">
    <location>
        <begin position="1"/>
        <end position="1067"/>
    </location>
</feature>
<feature type="domain" description="VPS9" evidence="1">
    <location>
        <begin position="280"/>
        <end position="432"/>
    </location>
</feature>
<accession>Q6CSG8</accession>
<evidence type="ECO:0000255" key="1">
    <source>
        <dbReference type="PROSITE-ProRule" id="PRU00550"/>
    </source>
</evidence>
<evidence type="ECO:0000305" key="2"/>
<protein>
    <recommendedName>
        <fullName>UPF0507 protein KLLA0D01133g</fullName>
    </recommendedName>
</protein>
<reference key="1">
    <citation type="journal article" date="2004" name="Nature">
        <title>Genome evolution in yeasts.</title>
        <authorList>
            <person name="Dujon B."/>
            <person name="Sherman D."/>
            <person name="Fischer G."/>
            <person name="Durrens P."/>
            <person name="Casaregola S."/>
            <person name="Lafontaine I."/>
            <person name="de Montigny J."/>
            <person name="Marck C."/>
            <person name="Neuveglise C."/>
            <person name="Talla E."/>
            <person name="Goffard N."/>
            <person name="Frangeul L."/>
            <person name="Aigle M."/>
            <person name="Anthouard V."/>
            <person name="Babour A."/>
            <person name="Barbe V."/>
            <person name="Barnay S."/>
            <person name="Blanchin S."/>
            <person name="Beckerich J.-M."/>
            <person name="Beyne E."/>
            <person name="Bleykasten C."/>
            <person name="Boisrame A."/>
            <person name="Boyer J."/>
            <person name="Cattolico L."/>
            <person name="Confanioleri F."/>
            <person name="de Daruvar A."/>
            <person name="Despons L."/>
            <person name="Fabre E."/>
            <person name="Fairhead C."/>
            <person name="Ferry-Dumazet H."/>
            <person name="Groppi A."/>
            <person name="Hantraye F."/>
            <person name="Hennequin C."/>
            <person name="Jauniaux N."/>
            <person name="Joyet P."/>
            <person name="Kachouri R."/>
            <person name="Kerrest A."/>
            <person name="Koszul R."/>
            <person name="Lemaire M."/>
            <person name="Lesur I."/>
            <person name="Ma L."/>
            <person name="Muller H."/>
            <person name="Nicaud J.-M."/>
            <person name="Nikolski M."/>
            <person name="Oztas S."/>
            <person name="Ozier-Kalogeropoulos O."/>
            <person name="Pellenz S."/>
            <person name="Potier S."/>
            <person name="Richard G.-F."/>
            <person name="Straub M.-L."/>
            <person name="Suleau A."/>
            <person name="Swennen D."/>
            <person name="Tekaia F."/>
            <person name="Wesolowski-Louvel M."/>
            <person name="Westhof E."/>
            <person name="Wirth B."/>
            <person name="Zeniou-Meyer M."/>
            <person name="Zivanovic Y."/>
            <person name="Bolotin-Fukuhara M."/>
            <person name="Thierry A."/>
            <person name="Bouchier C."/>
            <person name="Caudron B."/>
            <person name="Scarpelli C."/>
            <person name="Gaillardin C."/>
            <person name="Weissenbach J."/>
            <person name="Wincker P."/>
            <person name="Souciet J.-L."/>
        </authorList>
    </citation>
    <scope>NUCLEOTIDE SEQUENCE [LARGE SCALE GENOMIC DNA]</scope>
    <source>
        <strain>ATCC 8585 / CBS 2359 / DSM 70799 / NBRC 1267 / NRRL Y-1140 / WM37</strain>
    </source>
</reference>
<dbReference type="EMBL" id="CR382124">
    <property type="protein sequence ID" value="CAH00217.1"/>
    <property type="molecule type" value="Genomic_DNA"/>
</dbReference>
<dbReference type="RefSeq" id="XP_453121.1">
    <property type="nucleotide sequence ID" value="XM_453121.1"/>
</dbReference>
<dbReference type="SMR" id="Q6CSG8"/>
<dbReference type="FunCoup" id="Q6CSG8">
    <property type="interactions" value="28"/>
</dbReference>
<dbReference type="STRING" id="284590.Q6CSG8"/>
<dbReference type="PaxDb" id="284590-Q6CSG8"/>
<dbReference type="KEGG" id="kla:KLLA0_D01133g"/>
<dbReference type="eggNOG" id="ENOG502R3ZQ">
    <property type="taxonomic scope" value="Eukaryota"/>
</dbReference>
<dbReference type="HOGENOM" id="CLU_008912_0_0_1"/>
<dbReference type="InParanoid" id="Q6CSG8"/>
<dbReference type="OMA" id="LNCIFNN"/>
<dbReference type="Proteomes" id="UP000000598">
    <property type="component" value="Chromosome D"/>
</dbReference>
<dbReference type="GO" id="GO:0005769">
    <property type="term" value="C:early endosome"/>
    <property type="evidence" value="ECO:0007669"/>
    <property type="project" value="TreeGrafter"/>
</dbReference>
<dbReference type="GO" id="GO:0005770">
    <property type="term" value="C:late endosome"/>
    <property type="evidence" value="ECO:0007669"/>
    <property type="project" value="TreeGrafter"/>
</dbReference>
<dbReference type="GO" id="GO:0005886">
    <property type="term" value="C:plasma membrane"/>
    <property type="evidence" value="ECO:0007669"/>
    <property type="project" value="TreeGrafter"/>
</dbReference>
<dbReference type="GO" id="GO:0030133">
    <property type="term" value="C:transport vesicle"/>
    <property type="evidence" value="ECO:0007669"/>
    <property type="project" value="TreeGrafter"/>
</dbReference>
<dbReference type="GO" id="GO:0097422">
    <property type="term" value="C:tubular endosome"/>
    <property type="evidence" value="ECO:0007669"/>
    <property type="project" value="TreeGrafter"/>
</dbReference>
<dbReference type="GO" id="GO:0005085">
    <property type="term" value="F:guanyl-nucleotide exchange factor activity"/>
    <property type="evidence" value="ECO:0007669"/>
    <property type="project" value="TreeGrafter"/>
</dbReference>
<dbReference type="GO" id="GO:0000149">
    <property type="term" value="F:SNARE binding"/>
    <property type="evidence" value="ECO:0007669"/>
    <property type="project" value="TreeGrafter"/>
</dbReference>
<dbReference type="GO" id="GO:0045022">
    <property type="term" value="P:early endosome to late endosome transport"/>
    <property type="evidence" value="ECO:0007669"/>
    <property type="project" value="TreeGrafter"/>
</dbReference>
<dbReference type="Gene3D" id="1.25.40.20">
    <property type="entry name" value="Ankyrin repeat-containing domain"/>
    <property type="match status" value="1"/>
</dbReference>
<dbReference type="Gene3D" id="1.20.1050.80">
    <property type="entry name" value="VPS9 domain"/>
    <property type="match status" value="1"/>
</dbReference>
<dbReference type="InterPro" id="IPR036770">
    <property type="entry name" value="Ankyrin_rpt-contain_sf"/>
</dbReference>
<dbReference type="InterPro" id="IPR051248">
    <property type="entry name" value="UPF0507/Ank_repeat_27"/>
</dbReference>
<dbReference type="InterPro" id="IPR003123">
    <property type="entry name" value="VPS9"/>
</dbReference>
<dbReference type="InterPro" id="IPR037191">
    <property type="entry name" value="VPS9_dom_sf"/>
</dbReference>
<dbReference type="PANTHER" id="PTHR24170">
    <property type="entry name" value="ANKYRIN REPEAT DOMAIN-CONTAINING PROTEIN 27"/>
    <property type="match status" value="1"/>
</dbReference>
<dbReference type="PANTHER" id="PTHR24170:SF1">
    <property type="entry name" value="DOMAIN PROTEIN, PUTATIVE (AFU_ORTHOLOGUE AFUA_1G09870)-RELATED"/>
    <property type="match status" value="1"/>
</dbReference>
<dbReference type="Pfam" id="PF02204">
    <property type="entry name" value="VPS9"/>
    <property type="match status" value="1"/>
</dbReference>
<dbReference type="SUPFAM" id="SSF48403">
    <property type="entry name" value="Ankyrin repeat"/>
    <property type="match status" value="1"/>
</dbReference>
<dbReference type="SUPFAM" id="SSF109993">
    <property type="entry name" value="VPS9 domain"/>
    <property type="match status" value="1"/>
</dbReference>
<dbReference type="PROSITE" id="PS51205">
    <property type="entry name" value="VPS9"/>
    <property type="match status" value="1"/>
</dbReference>
<keyword id="KW-1185">Reference proteome</keyword>
<gene>
    <name type="ordered locus">KLLA0D01133g</name>
</gene>
<comment type="similarity">
    <text evidence="2">Belongs to the UPF0507 family.</text>
</comment>
<sequence>MPYHLPVLLNPLLNAIFNCPSPKTSSLKQMFSRLDDERFFILVPSTETLLQFQDLESGLELAELCYHYDFVASHIVVIKDPTKDVPDQRSIYNTDFTTLNGRKLSIRYRNSTIVTGDGFTERRKITIKEINLLPTFNDYLKGSNYTPILHISMPLCGDLVPLDELQVFSKVAGNKYSKQEQAPLPFDEEQKKVLYFEQRIQSISDVAERVALTFHLTKARIKKAISVIGIRTEWLNTRDSIRQIISLDKRLNHLEDLDAMIYDYVELKLFTDIQQQLSEIVEDQELEHRFDFKALRSISLNQVPTNFYPKDEKSFSLASVVELEKSVNDALEYLKSIDLKTTHSGKLEVLSTTMRLLSREINGISTDADTLLSLFVLLICRSQVTGLVRTLTYLTNFEISETSIKFGLQGYVLSTFEAALSFFHQDTVDSLTKKCASNKKIWASIQKHSKVEAELLSSNLRIRTDSGESLLSICIQSHNNEVLTTLLANFESEFPLEDILDDRDFALSTLLIQALQVQNSQAAAILSEIILKSCTESEVRSYLNSPNLHNRITAHYIMQDISLLESVGRYFNWEHKDINGHTPLFAVFRSYDAVNYDEIVTKVLDQVVKWYANNNKPFNFKIHEDPKGNTLLHVMKSGIESLLKLPDVNVNKPDSKGLTPLMIYSRYNRITNIETIMKDERLLCDLVQQPLVMTSLDFTKNPKVTKTILDATFNREPVVIHSLRFEERKWKIGIFSEGIFKKYSLDLIQYYLRYLKIMYPCSFHPVQLLTNELRLLGIYGVPGVLRLQSYHTFKKLDMLFSYVNTRGKLWLGKDEEELKVLLDVPTPYLSESERFIKLEPEEINGIQTFLKYNLAEFQKLRNCLIILKKLAIVQQIKHRDVITMRNSFLSLGNQMSQKGVAKSFENTNCAWSYDLSYYEFTRNLEYLEHSVVTLLNNFESLLAKTTLWWKHFGELMELKKEWKKNFPNDKAPPSSANRNFIDTYIEGKRSKFRNKLSNQLKMSSLNLKKIGGEIKTTHESIAVGINLFIEFKEQFYHDHIVKSIVDQRIRENKQIMQQLIDTMKGHV</sequence>
<name>U507_KLULA</name>
<proteinExistence type="inferred from homology"/>